<keyword id="KW-0002">3D-structure</keyword>
<keyword id="KW-0963">Cytoplasm</keyword>
<keyword id="KW-0378">Hydrolase</keyword>
<keyword id="KW-0645">Protease</keyword>
<keyword id="KW-1185">Reference proteome</keyword>
<keyword id="KW-0720">Serine protease</keyword>
<organism>
    <name type="scientific">Helicobacter pylori (strain ATCC 700392 / 26695)</name>
    <name type="common">Campylobacter pylori</name>
    <dbReference type="NCBI Taxonomy" id="85962"/>
    <lineage>
        <taxon>Bacteria</taxon>
        <taxon>Pseudomonadati</taxon>
        <taxon>Campylobacterota</taxon>
        <taxon>Epsilonproteobacteria</taxon>
        <taxon>Campylobacterales</taxon>
        <taxon>Helicobacteraceae</taxon>
        <taxon>Helicobacter</taxon>
    </lineage>
</organism>
<accession>P56156</accession>
<gene>
    <name evidence="1" type="primary">clpP</name>
    <name type="ordered locus">HP_0794</name>
</gene>
<evidence type="ECO:0000255" key="1">
    <source>
        <dbReference type="HAMAP-Rule" id="MF_00444"/>
    </source>
</evidence>
<evidence type="ECO:0007829" key="2">
    <source>
        <dbReference type="PDB" id="2ZL2"/>
    </source>
</evidence>
<proteinExistence type="evidence at protein level"/>
<dbReference type="EC" id="3.4.21.92" evidence="1"/>
<dbReference type="EMBL" id="AE000511">
    <property type="protein sequence ID" value="AAD07842.1"/>
    <property type="molecule type" value="Genomic_DNA"/>
</dbReference>
<dbReference type="PIR" id="B64619">
    <property type="entry name" value="B64619"/>
</dbReference>
<dbReference type="RefSeq" id="NP_207587.1">
    <property type="nucleotide sequence ID" value="NC_000915.1"/>
</dbReference>
<dbReference type="PDB" id="2ZL0">
    <property type="method" value="X-ray"/>
    <property type="resolution" value="2.60 A"/>
    <property type="chains" value="A/B/C/D/E/F/G/H/I/J/K/L/M/N=1-196"/>
</dbReference>
<dbReference type="PDB" id="2ZL2">
    <property type="method" value="X-ray"/>
    <property type="resolution" value="2.50 A"/>
    <property type="chains" value="A/B/C/D/E/F/G/H/I/J/K/L/M/N=1-196"/>
</dbReference>
<dbReference type="PDB" id="2ZL3">
    <property type="method" value="X-ray"/>
    <property type="resolution" value="2.81 A"/>
    <property type="chains" value="A/B/C/D/E/F/G/H/I/J/K/L/M/N=1-196"/>
</dbReference>
<dbReference type="PDB" id="2ZL4">
    <property type="method" value="X-ray"/>
    <property type="resolution" value="2.50 A"/>
    <property type="chains" value="A/B/C/D/E/F/G/H/I/J/K/L/M/N=1-196"/>
</dbReference>
<dbReference type="PDBsum" id="2ZL0"/>
<dbReference type="PDBsum" id="2ZL2"/>
<dbReference type="PDBsum" id="2ZL3"/>
<dbReference type="PDBsum" id="2ZL4"/>
<dbReference type="SMR" id="P56156"/>
<dbReference type="DIP" id="DIP-3357N"/>
<dbReference type="FunCoup" id="P56156">
    <property type="interactions" value="339"/>
</dbReference>
<dbReference type="IntAct" id="P56156">
    <property type="interactions" value="1"/>
</dbReference>
<dbReference type="MINT" id="P56156"/>
<dbReference type="STRING" id="85962.HP_0794"/>
<dbReference type="MEROPS" id="S14.001"/>
<dbReference type="PaxDb" id="85962-C694_04070"/>
<dbReference type="EnsemblBacteria" id="AAD07842">
    <property type="protein sequence ID" value="AAD07842"/>
    <property type="gene ID" value="HP_0794"/>
</dbReference>
<dbReference type="KEGG" id="hpy:HP_0794"/>
<dbReference type="PATRIC" id="fig|85962.8.peg.826"/>
<dbReference type="eggNOG" id="COG0740">
    <property type="taxonomic scope" value="Bacteria"/>
</dbReference>
<dbReference type="InParanoid" id="P56156"/>
<dbReference type="OrthoDB" id="9802800at2"/>
<dbReference type="PhylomeDB" id="P56156"/>
<dbReference type="EvolutionaryTrace" id="P56156"/>
<dbReference type="Proteomes" id="UP000000429">
    <property type="component" value="Chromosome"/>
</dbReference>
<dbReference type="GO" id="GO:0005737">
    <property type="term" value="C:cytoplasm"/>
    <property type="evidence" value="ECO:0007669"/>
    <property type="project" value="UniProtKB-SubCell"/>
</dbReference>
<dbReference type="GO" id="GO:0009368">
    <property type="term" value="C:endopeptidase Clp complex"/>
    <property type="evidence" value="ECO:0000318"/>
    <property type="project" value="GO_Central"/>
</dbReference>
<dbReference type="GO" id="GO:0004176">
    <property type="term" value="F:ATP-dependent peptidase activity"/>
    <property type="evidence" value="ECO:0000318"/>
    <property type="project" value="GO_Central"/>
</dbReference>
<dbReference type="GO" id="GO:0051117">
    <property type="term" value="F:ATPase binding"/>
    <property type="evidence" value="ECO:0000318"/>
    <property type="project" value="GO_Central"/>
</dbReference>
<dbReference type="GO" id="GO:0004252">
    <property type="term" value="F:serine-type endopeptidase activity"/>
    <property type="evidence" value="ECO:0000318"/>
    <property type="project" value="GO_Central"/>
</dbReference>
<dbReference type="GO" id="GO:0006515">
    <property type="term" value="P:protein quality control for misfolded or incompletely synthesized proteins"/>
    <property type="evidence" value="ECO:0000318"/>
    <property type="project" value="GO_Central"/>
</dbReference>
<dbReference type="CDD" id="cd07017">
    <property type="entry name" value="S14_ClpP_2"/>
    <property type="match status" value="1"/>
</dbReference>
<dbReference type="FunFam" id="3.90.226.10:FF:000001">
    <property type="entry name" value="ATP-dependent Clp protease proteolytic subunit"/>
    <property type="match status" value="1"/>
</dbReference>
<dbReference type="Gene3D" id="3.90.226.10">
    <property type="entry name" value="2-enoyl-CoA Hydratase, Chain A, domain 1"/>
    <property type="match status" value="1"/>
</dbReference>
<dbReference type="HAMAP" id="MF_00444">
    <property type="entry name" value="ClpP"/>
    <property type="match status" value="1"/>
</dbReference>
<dbReference type="InterPro" id="IPR001907">
    <property type="entry name" value="ClpP"/>
</dbReference>
<dbReference type="InterPro" id="IPR029045">
    <property type="entry name" value="ClpP/crotonase-like_dom_sf"/>
</dbReference>
<dbReference type="InterPro" id="IPR023562">
    <property type="entry name" value="ClpP/TepA"/>
</dbReference>
<dbReference type="InterPro" id="IPR033135">
    <property type="entry name" value="ClpP_His_AS"/>
</dbReference>
<dbReference type="InterPro" id="IPR018215">
    <property type="entry name" value="ClpP_Ser_AS"/>
</dbReference>
<dbReference type="NCBIfam" id="TIGR00493">
    <property type="entry name" value="clpP"/>
    <property type="match status" value="1"/>
</dbReference>
<dbReference type="NCBIfam" id="NF001368">
    <property type="entry name" value="PRK00277.1"/>
    <property type="match status" value="1"/>
</dbReference>
<dbReference type="NCBIfam" id="NF009205">
    <property type="entry name" value="PRK12553.1"/>
    <property type="match status" value="1"/>
</dbReference>
<dbReference type="PANTHER" id="PTHR10381">
    <property type="entry name" value="ATP-DEPENDENT CLP PROTEASE PROTEOLYTIC SUBUNIT"/>
    <property type="match status" value="1"/>
</dbReference>
<dbReference type="PANTHER" id="PTHR10381:SF70">
    <property type="entry name" value="ATP-DEPENDENT CLP PROTEASE PROTEOLYTIC SUBUNIT"/>
    <property type="match status" value="1"/>
</dbReference>
<dbReference type="Pfam" id="PF00574">
    <property type="entry name" value="CLP_protease"/>
    <property type="match status" value="1"/>
</dbReference>
<dbReference type="PRINTS" id="PR00127">
    <property type="entry name" value="CLPPROTEASEP"/>
</dbReference>
<dbReference type="SUPFAM" id="SSF52096">
    <property type="entry name" value="ClpP/crotonase"/>
    <property type="match status" value="1"/>
</dbReference>
<dbReference type="PROSITE" id="PS00382">
    <property type="entry name" value="CLP_PROTEASE_HIS"/>
    <property type="match status" value="1"/>
</dbReference>
<dbReference type="PROSITE" id="PS00381">
    <property type="entry name" value="CLP_PROTEASE_SER"/>
    <property type="match status" value="1"/>
</dbReference>
<feature type="chain" id="PRO_0000179568" description="ATP-dependent Clp protease proteolytic subunit">
    <location>
        <begin position="1"/>
        <end position="196"/>
    </location>
</feature>
<feature type="active site" description="Nucleophile" evidence="1">
    <location>
        <position position="99"/>
    </location>
</feature>
<feature type="active site" evidence="1">
    <location>
        <position position="124"/>
    </location>
</feature>
<feature type="helix" evidence="2">
    <location>
        <begin position="21"/>
        <end position="26"/>
    </location>
</feature>
<feature type="turn" evidence="2">
    <location>
        <begin position="27"/>
        <end position="29"/>
    </location>
</feature>
<feature type="strand" evidence="2">
    <location>
        <begin position="30"/>
        <end position="35"/>
    </location>
</feature>
<feature type="helix" evidence="2">
    <location>
        <begin position="39"/>
        <end position="55"/>
    </location>
</feature>
<feature type="strand" evidence="2">
    <location>
        <begin position="57"/>
        <end position="59"/>
    </location>
</feature>
<feature type="strand" evidence="2">
    <location>
        <begin position="61"/>
        <end position="67"/>
    </location>
</feature>
<feature type="helix" evidence="2">
    <location>
        <begin position="72"/>
        <end position="84"/>
    </location>
</feature>
<feature type="strand" evidence="2">
    <location>
        <begin position="85"/>
        <end position="87"/>
    </location>
</feature>
<feature type="strand" evidence="2">
    <location>
        <begin position="89"/>
        <end position="98"/>
    </location>
</feature>
<feature type="helix" evidence="2">
    <location>
        <begin position="100"/>
        <end position="105"/>
    </location>
</feature>
<feature type="strand" evidence="2">
    <location>
        <begin position="113"/>
        <end position="115"/>
    </location>
</feature>
<feature type="strand" evidence="2">
    <location>
        <begin position="120"/>
        <end position="123"/>
    </location>
</feature>
<feature type="strand" evidence="2">
    <location>
        <begin position="127"/>
        <end position="133"/>
    </location>
</feature>
<feature type="helix" evidence="2">
    <location>
        <begin position="134"/>
        <end position="159"/>
    </location>
</feature>
<feature type="helix" evidence="2">
    <location>
        <begin position="163"/>
        <end position="169"/>
    </location>
</feature>
<feature type="strand" evidence="2">
    <location>
        <begin position="174"/>
        <end position="177"/>
    </location>
</feature>
<feature type="helix" evidence="2">
    <location>
        <begin position="178"/>
        <end position="183"/>
    </location>
</feature>
<feature type="strand" evidence="2">
    <location>
        <begin position="188"/>
        <end position="190"/>
    </location>
</feature>
<reference key="1">
    <citation type="journal article" date="1997" name="Nature">
        <title>The complete genome sequence of the gastric pathogen Helicobacter pylori.</title>
        <authorList>
            <person name="Tomb J.-F."/>
            <person name="White O."/>
            <person name="Kerlavage A.R."/>
            <person name="Clayton R.A."/>
            <person name="Sutton G.G."/>
            <person name="Fleischmann R.D."/>
            <person name="Ketchum K.A."/>
            <person name="Klenk H.-P."/>
            <person name="Gill S.R."/>
            <person name="Dougherty B.A."/>
            <person name="Nelson K.E."/>
            <person name="Quackenbush J."/>
            <person name="Zhou L."/>
            <person name="Kirkness E.F."/>
            <person name="Peterson S.N."/>
            <person name="Loftus B.J."/>
            <person name="Richardson D.L."/>
            <person name="Dodson R.J."/>
            <person name="Khalak H.G."/>
            <person name="Glodek A."/>
            <person name="McKenney K."/>
            <person name="FitzGerald L.M."/>
            <person name="Lee N."/>
            <person name="Adams M.D."/>
            <person name="Hickey E.K."/>
            <person name="Berg D.E."/>
            <person name="Gocayne J.D."/>
            <person name="Utterback T.R."/>
            <person name="Peterson J.D."/>
            <person name="Kelley J.M."/>
            <person name="Cotton M.D."/>
            <person name="Weidman J.F."/>
            <person name="Fujii C."/>
            <person name="Bowman C."/>
            <person name="Watthey L."/>
            <person name="Wallin E."/>
            <person name="Hayes W.S."/>
            <person name="Borodovsky M."/>
            <person name="Karp P.D."/>
            <person name="Smith H.O."/>
            <person name="Fraser C.M."/>
            <person name="Venter J.C."/>
        </authorList>
    </citation>
    <scope>NUCLEOTIDE SEQUENCE [LARGE SCALE GENOMIC DNA]</scope>
    <source>
        <strain>ATCC 700392 / 26695</strain>
    </source>
</reference>
<comment type="function">
    <text evidence="1">Cleaves peptides in various proteins in a process that requires ATP hydrolysis. Has a chymotrypsin-like activity. Plays a major role in the degradation of misfolded proteins.</text>
</comment>
<comment type="catalytic activity">
    <reaction evidence="1">
        <text>Hydrolysis of proteins to small peptides in the presence of ATP and magnesium. alpha-casein is the usual test substrate. In the absence of ATP, only oligopeptides shorter than five residues are hydrolyzed (such as succinyl-Leu-Tyr-|-NHMec, and Leu-Tyr-Leu-|-Tyr-Trp, in which cleavage of the -Tyr-|-Leu- and -Tyr-|-Trp bonds also occurs).</text>
        <dbReference type="EC" id="3.4.21.92"/>
    </reaction>
</comment>
<comment type="subunit">
    <text evidence="1">Fourteen ClpP subunits assemble into 2 heptameric rings which stack back to back to give a disk-like structure with a central cavity, resembling the structure of eukaryotic proteasomes.</text>
</comment>
<comment type="subcellular location">
    <subcellularLocation>
        <location evidence="1">Cytoplasm</location>
    </subcellularLocation>
</comment>
<comment type="similarity">
    <text evidence="1">Belongs to the peptidase S14 family.</text>
</comment>
<protein>
    <recommendedName>
        <fullName evidence="1">ATP-dependent Clp protease proteolytic subunit</fullName>
        <ecNumber evidence="1">3.4.21.92</ecNumber>
    </recommendedName>
    <alternativeName>
        <fullName evidence="1">Endopeptidase Clp</fullName>
    </alternativeName>
</protein>
<sequence>MMGYIPYVIENTDRGERSYDIYSRLLKDRIVLLSGEINDSVASSIVAQLLFLEAEDPEKDIGLYINSPGGVITSGLSIYDTMNFIRPDVSTICIGQAASMGAFLLSCGAKGKRFSLPHSRIMIHQPLGGAQGQASDIEIISNEILRLKGLMNSILAQNSGQSLEQIAKDTDRDFYMSAKEAKEYGLIDKVLQKNVK</sequence>
<name>CLPP_HELPY</name>